<evidence type="ECO:0000255" key="1">
    <source>
        <dbReference type="HAMAP-Rule" id="MF_00101"/>
    </source>
</evidence>
<feature type="chain" id="PRO_0000175636" description="Holo-[acyl-carrier-protein] synthase">
    <location>
        <begin position="1"/>
        <end position="124"/>
    </location>
</feature>
<feature type="binding site" evidence="1">
    <location>
        <position position="8"/>
    </location>
    <ligand>
        <name>Mg(2+)</name>
        <dbReference type="ChEBI" id="CHEBI:18420"/>
    </ligand>
</feature>
<feature type="binding site" evidence="1">
    <location>
        <position position="56"/>
    </location>
    <ligand>
        <name>Mg(2+)</name>
        <dbReference type="ChEBI" id="CHEBI:18420"/>
    </ligand>
</feature>
<reference key="1">
    <citation type="journal article" date="2001" name="J. Bacteriol.">
        <title>Genome sequence and comparative analysis of the solvent-producing bacterium Clostridium acetobutylicum.</title>
        <authorList>
            <person name="Noelling J."/>
            <person name="Breton G."/>
            <person name="Omelchenko M.V."/>
            <person name="Makarova K.S."/>
            <person name="Zeng Q."/>
            <person name="Gibson R."/>
            <person name="Lee H.M."/>
            <person name="Dubois J."/>
            <person name="Qiu D."/>
            <person name="Hitti J."/>
            <person name="Wolf Y.I."/>
            <person name="Tatusov R.L."/>
            <person name="Sabathe F."/>
            <person name="Doucette-Stamm L.A."/>
            <person name="Soucaille P."/>
            <person name="Daly M.J."/>
            <person name="Bennett G.N."/>
            <person name="Koonin E.V."/>
            <person name="Smith D.R."/>
        </authorList>
    </citation>
    <scope>NUCLEOTIDE SEQUENCE [LARGE SCALE GENOMIC DNA]</scope>
    <source>
        <strain>ATCC 824 / DSM 792 / JCM 1419 / IAM 19013 / LMG 5710 / NBRC 13948 / NRRL B-527 / VKM B-1787 / 2291 / W</strain>
    </source>
</reference>
<organism>
    <name type="scientific">Clostridium acetobutylicum (strain ATCC 824 / DSM 792 / JCM 1419 / IAM 19013 / LMG 5710 / NBRC 13948 / NRRL B-527 / VKM B-1787 / 2291 / W)</name>
    <dbReference type="NCBI Taxonomy" id="272562"/>
    <lineage>
        <taxon>Bacteria</taxon>
        <taxon>Bacillati</taxon>
        <taxon>Bacillota</taxon>
        <taxon>Clostridia</taxon>
        <taxon>Eubacteriales</taxon>
        <taxon>Clostridiaceae</taxon>
        <taxon>Clostridium</taxon>
    </lineage>
</organism>
<keyword id="KW-0963">Cytoplasm</keyword>
<keyword id="KW-0275">Fatty acid biosynthesis</keyword>
<keyword id="KW-0276">Fatty acid metabolism</keyword>
<keyword id="KW-0444">Lipid biosynthesis</keyword>
<keyword id="KW-0443">Lipid metabolism</keyword>
<keyword id="KW-0460">Magnesium</keyword>
<keyword id="KW-0479">Metal-binding</keyword>
<keyword id="KW-1185">Reference proteome</keyword>
<keyword id="KW-0808">Transferase</keyword>
<gene>
    <name evidence="1" type="primary">acpS</name>
    <name type="ordered locus">CA_C0489</name>
</gene>
<protein>
    <recommendedName>
        <fullName evidence="1">Holo-[acyl-carrier-protein] synthase</fullName>
        <shortName evidence="1">Holo-ACP synthase</shortName>
        <ecNumber evidence="1">2.7.8.7</ecNumber>
    </recommendedName>
    <alternativeName>
        <fullName evidence="1">4'-phosphopantetheinyl transferase AcpS</fullName>
    </alternativeName>
</protein>
<accession>Q97LR5</accession>
<dbReference type="EC" id="2.7.8.7" evidence="1"/>
<dbReference type="EMBL" id="AE001437">
    <property type="protein sequence ID" value="AAK78469.1"/>
    <property type="molecule type" value="Genomic_DNA"/>
</dbReference>
<dbReference type="PIR" id="B96960">
    <property type="entry name" value="B96960"/>
</dbReference>
<dbReference type="RefSeq" id="NP_347129.1">
    <property type="nucleotide sequence ID" value="NC_003030.1"/>
</dbReference>
<dbReference type="RefSeq" id="WP_010963811.1">
    <property type="nucleotide sequence ID" value="NC_003030.1"/>
</dbReference>
<dbReference type="SMR" id="Q97LR5"/>
<dbReference type="STRING" id="272562.CA_C0489"/>
<dbReference type="GeneID" id="44996998"/>
<dbReference type="KEGG" id="cac:CA_C0489"/>
<dbReference type="PATRIC" id="fig|272562.8.peg.688"/>
<dbReference type="eggNOG" id="COG0736">
    <property type="taxonomic scope" value="Bacteria"/>
</dbReference>
<dbReference type="HOGENOM" id="CLU_089696_0_2_9"/>
<dbReference type="OrthoDB" id="517356at2"/>
<dbReference type="Proteomes" id="UP000000814">
    <property type="component" value="Chromosome"/>
</dbReference>
<dbReference type="GO" id="GO:0005737">
    <property type="term" value="C:cytoplasm"/>
    <property type="evidence" value="ECO:0007669"/>
    <property type="project" value="UniProtKB-SubCell"/>
</dbReference>
<dbReference type="GO" id="GO:0008897">
    <property type="term" value="F:holo-[acyl-carrier-protein] synthase activity"/>
    <property type="evidence" value="ECO:0007669"/>
    <property type="project" value="UniProtKB-UniRule"/>
</dbReference>
<dbReference type="GO" id="GO:0000287">
    <property type="term" value="F:magnesium ion binding"/>
    <property type="evidence" value="ECO:0007669"/>
    <property type="project" value="UniProtKB-UniRule"/>
</dbReference>
<dbReference type="GO" id="GO:0006633">
    <property type="term" value="P:fatty acid biosynthetic process"/>
    <property type="evidence" value="ECO:0007669"/>
    <property type="project" value="UniProtKB-UniRule"/>
</dbReference>
<dbReference type="Gene3D" id="3.90.470.20">
    <property type="entry name" value="4'-phosphopantetheinyl transferase domain"/>
    <property type="match status" value="1"/>
</dbReference>
<dbReference type="HAMAP" id="MF_00101">
    <property type="entry name" value="AcpS"/>
    <property type="match status" value="1"/>
</dbReference>
<dbReference type="InterPro" id="IPR008278">
    <property type="entry name" value="4-PPantetheinyl_Trfase_dom"/>
</dbReference>
<dbReference type="InterPro" id="IPR037143">
    <property type="entry name" value="4-PPantetheinyl_Trfase_dom_sf"/>
</dbReference>
<dbReference type="InterPro" id="IPR002582">
    <property type="entry name" value="ACPS"/>
</dbReference>
<dbReference type="InterPro" id="IPR004568">
    <property type="entry name" value="Ppantetheine-prot_Trfase_dom"/>
</dbReference>
<dbReference type="NCBIfam" id="TIGR00516">
    <property type="entry name" value="acpS"/>
    <property type="match status" value="1"/>
</dbReference>
<dbReference type="NCBIfam" id="TIGR00556">
    <property type="entry name" value="pantethn_trn"/>
    <property type="match status" value="1"/>
</dbReference>
<dbReference type="Pfam" id="PF01648">
    <property type="entry name" value="ACPS"/>
    <property type="match status" value="1"/>
</dbReference>
<dbReference type="SUPFAM" id="SSF56214">
    <property type="entry name" value="4'-phosphopantetheinyl transferase"/>
    <property type="match status" value="1"/>
</dbReference>
<sequence length="124" mass="13882">MIKGVGVDIIEINRVKNAIDRNYKFIEKLFSRREIAYIKAEKTKAQYIAGRFSAKEAVSKALGTGFRGFSFKNIEIHKDDLGKPIVVLNGGARAIAEGYGKYQVQLSISHDREKAIAYAVLEVF</sequence>
<proteinExistence type="inferred from homology"/>
<comment type="function">
    <text evidence="1">Transfers the 4'-phosphopantetheine moiety from coenzyme A to a Ser of acyl-carrier-protein.</text>
</comment>
<comment type="catalytic activity">
    <reaction evidence="1">
        <text>apo-[ACP] + CoA = holo-[ACP] + adenosine 3',5'-bisphosphate + H(+)</text>
        <dbReference type="Rhea" id="RHEA:12068"/>
        <dbReference type="Rhea" id="RHEA-COMP:9685"/>
        <dbReference type="Rhea" id="RHEA-COMP:9690"/>
        <dbReference type="ChEBI" id="CHEBI:15378"/>
        <dbReference type="ChEBI" id="CHEBI:29999"/>
        <dbReference type="ChEBI" id="CHEBI:57287"/>
        <dbReference type="ChEBI" id="CHEBI:58343"/>
        <dbReference type="ChEBI" id="CHEBI:64479"/>
        <dbReference type="EC" id="2.7.8.7"/>
    </reaction>
</comment>
<comment type="cofactor">
    <cofactor evidence="1">
        <name>Mg(2+)</name>
        <dbReference type="ChEBI" id="CHEBI:18420"/>
    </cofactor>
</comment>
<comment type="subcellular location">
    <subcellularLocation>
        <location evidence="1">Cytoplasm</location>
    </subcellularLocation>
</comment>
<comment type="similarity">
    <text evidence="1">Belongs to the P-Pant transferase superfamily. AcpS family.</text>
</comment>
<name>ACPS_CLOAB</name>